<accession>Q1MIM7</accession>
<dbReference type="EC" id="3.4.21.92" evidence="1"/>
<dbReference type="EMBL" id="AM236080">
    <property type="protein sequence ID" value="CAK07183.1"/>
    <property type="molecule type" value="Genomic_DNA"/>
</dbReference>
<dbReference type="SMR" id="Q1MIM7"/>
<dbReference type="MEROPS" id="S14.001"/>
<dbReference type="EnsemblBacteria" id="CAK07183">
    <property type="protein sequence ID" value="CAK07183"/>
    <property type="gene ID" value="RL1688"/>
</dbReference>
<dbReference type="KEGG" id="rle:RL1688"/>
<dbReference type="eggNOG" id="COG0740">
    <property type="taxonomic scope" value="Bacteria"/>
</dbReference>
<dbReference type="HOGENOM" id="CLU_058707_3_2_5"/>
<dbReference type="Proteomes" id="UP000006575">
    <property type="component" value="Chromosome"/>
</dbReference>
<dbReference type="GO" id="GO:0005737">
    <property type="term" value="C:cytoplasm"/>
    <property type="evidence" value="ECO:0007669"/>
    <property type="project" value="UniProtKB-SubCell"/>
</dbReference>
<dbReference type="GO" id="GO:0009368">
    <property type="term" value="C:endopeptidase Clp complex"/>
    <property type="evidence" value="ECO:0007669"/>
    <property type="project" value="TreeGrafter"/>
</dbReference>
<dbReference type="GO" id="GO:0004176">
    <property type="term" value="F:ATP-dependent peptidase activity"/>
    <property type="evidence" value="ECO:0007669"/>
    <property type="project" value="InterPro"/>
</dbReference>
<dbReference type="GO" id="GO:0051117">
    <property type="term" value="F:ATPase binding"/>
    <property type="evidence" value="ECO:0007669"/>
    <property type="project" value="TreeGrafter"/>
</dbReference>
<dbReference type="GO" id="GO:0004252">
    <property type="term" value="F:serine-type endopeptidase activity"/>
    <property type="evidence" value="ECO:0007669"/>
    <property type="project" value="UniProtKB-UniRule"/>
</dbReference>
<dbReference type="GO" id="GO:0006515">
    <property type="term" value="P:protein quality control for misfolded or incompletely synthesized proteins"/>
    <property type="evidence" value="ECO:0007669"/>
    <property type="project" value="TreeGrafter"/>
</dbReference>
<dbReference type="CDD" id="cd07017">
    <property type="entry name" value="S14_ClpP_2"/>
    <property type="match status" value="1"/>
</dbReference>
<dbReference type="FunFam" id="3.90.226.10:FF:000001">
    <property type="entry name" value="ATP-dependent Clp protease proteolytic subunit"/>
    <property type="match status" value="1"/>
</dbReference>
<dbReference type="Gene3D" id="3.90.226.10">
    <property type="entry name" value="2-enoyl-CoA Hydratase, Chain A, domain 1"/>
    <property type="match status" value="1"/>
</dbReference>
<dbReference type="HAMAP" id="MF_00444">
    <property type="entry name" value="ClpP"/>
    <property type="match status" value="1"/>
</dbReference>
<dbReference type="InterPro" id="IPR001907">
    <property type="entry name" value="ClpP"/>
</dbReference>
<dbReference type="InterPro" id="IPR029045">
    <property type="entry name" value="ClpP/crotonase-like_dom_sf"/>
</dbReference>
<dbReference type="InterPro" id="IPR023562">
    <property type="entry name" value="ClpP/TepA"/>
</dbReference>
<dbReference type="InterPro" id="IPR033135">
    <property type="entry name" value="ClpP_His_AS"/>
</dbReference>
<dbReference type="InterPro" id="IPR018215">
    <property type="entry name" value="ClpP_Ser_AS"/>
</dbReference>
<dbReference type="NCBIfam" id="TIGR00493">
    <property type="entry name" value="clpP"/>
    <property type="match status" value="1"/>
</dbReference>
<dbReference type="NCBIfam" id="NF001368">
    <property type="entry name" value="PRK00277.1"/>
    <property type="match status" value="1"/>
</dbReference>
<dbReference type="NCBIfam" id="NF009205">
    <property type="entry name" value="PRK12553.1"/>
    <property type="match status" value="1"/>
</dbReference>
<dbReference type="PANTHER" id="PTHR10381">
    <property type="entry name" value="ATP-DEPENDENT CLP PROTEASE PROTEOLYTIC SUBUNIT"/>
    <property type="match status" value="1"/>
</dbReference>
<dbReference type="PANTHER" id="PTHR10381:SF70">
    <property type="entry name" value="ATP-DEPENDENT CLP PROTEASE PROTEOLYTIC SUBUNIT"/>
    <property type="match status" value="1"/>
</dbReference>
<dbReference type="Pfam" id="PF00574">
    <property type="entry name" value="CLP_protease"/>
    <property type="match status" value="1"/>
</dbReference>
<dbReference type="PRINTS" id="PR00127">
    <property type="entry name" value="CLPPROTEASEP"/>
</dbReference>
<dbReference type="SUPFAM" id="SSF52096">
    <property type="entry name" value="ClpP/crotonase"/>
    <property type="match status" value="1"/>
</dbReference>
<dbReference type="PROSITE" id="PS00382">
    <property type="entry name" value="CLP_PROTEASE_HIS"/>
    <property type="match status" value="1"/>
</dbReference>
<dbReference type="PROSITE" id="PS00381">
    <property type="entry name" value="CLP_PROTEASE_SER"/>
    <property type="match status" value="1"/>
</dbReference>
<proteinExistence type="inferred from homology"/>
<reference key="1">
    <citation type="journal article" date="2006" name="Genome Biol.">
        <title>The genome of Rhizobium leguminosarum has recognizable core and accessory components.</title>
        <authorList>
            <person name="Young J.P.W."/>
            <person name="Crossman L.C."/>
            <person name="Johnston A.W.B."/>
            <person name="Thomson N.R."/>
            <person name="Ghazoui Z.F."/>
            <person name="Hull K.H."/>
            <person name="Wexler M."/>
            <person name="Curson A.R.J."/>
            <person name="Todd J.D."/>
            <person name="Poole P.S."/>
            <person name="Mauchline T.H."/>
            <person name="East A.K."/>
            <person name="Quail M.A."/>
            <person name="Churcher C."/>
            <person name="Arrowsmith C."/>
            <person name="Cherevach I."/>
            <person name="Chillingworth T."/>
            <person name="Clarke K."/>
            <person name="Cronin A."/>
            <person name="Davis P."/>
            <person name="Fraser A."/>
            <person name="Hance Z."/>
            <person name="Hauser H."/>
            <person name="Jagels K."/>
            <person name="Moule S."/>
            <person name="Mungall K."/>
            <person name="Norbertczak H."/>
            <person name="Rabbinowitsch E."/>
            <person name="Sanders M."/>
            <person name="Simmonds M."/>
            <person name="Whitehead S."/>
            <person name="Parkhill J."/>
        </authorList>
    </citation>
    <scope>NUCLEOTIDE SEQUENCE [LARGE SCALE GENOMIC DNA]</scope>
    <source>
        <strain>DSM 114642 / LMG 32736 / 3841</strain>
    </source>
</reference>
<sequence>MALVPMVVEQTNRGERSYDIYSRLLKERIIFLTGAVEDHMATLVCAQLLFLEAENPKKEIALYINSPGGVVTAGMAIYDTMQFIKPAVSTLCIGQAASMGSLLLAAGHKDMRFATPNSRIMVHQPSGGFQGQASDIERHARDILKMKRRLNEVYVKHTGRTYEEVEKTLDRDHFMDADEAQSWGVIDKVLTSRLEMEGEQA</sequence>
<comment type="function">
    <text evidence="1">Cleaves peptides in various proteins in a process that requires ATP hydrolysis. Has a chymotrypsin-like activity. Plays a major role in the degradation of misfolded proteins.</text>
</comment>
<comment type="catalytic activity">
    <reaction evidence="1">
        <text>Hydrolysis of proteins to small peptides in the presence of ATP and magnesium. alpha-casein is the usual test substrate. In the absence of ATP, only oligopeptides shorter than five residues are hydrolyzed (such as succinyl-Leu-Tyr-|-NHMec, and Leu-Tyr-Leu-|-Tyr-Trp, in which cleavage of the -Tyr-|-Leu- and -Tyr-|-Trp bonds also occurs).</text>
        <dbReference type="EC" id="3.4.21.92"/>
    </reaction>
</comment>
<comment type="subunit">
    <text evidence="1">Fourteen ClpP subunits assemble into 2 heptameric rings which stack back to back to give a disk-like structure with a central cavity, resembling the structure of eukaryotic proteasomes.</text>
</comment>
<comment type="subcellular location">
    <subcellularLocation>
        <location evidence="1">Cytoplasm</location>
    </subcellularLocation>
</comment>
<comment type="similarity">
    <text evidence="1">Belongs to the peptidase S14 family.</text>
</comment>
<name>CLPP2_RHIJ3</name>
<gene>
    <name evidence="1" type="primary">clpP2</name>
    <name type="ordered locus">RL1688</name>
</gene>
<keyword id="KW-0963">Cytoplasm</keyword>
<keyword id="KW-0378">Hydrolase</keyword>
<keyword id="KW-0645">Protease</keyword>
<keyword id="KW-0720">Serine protease</keyword>
<organism>
    <name type="scientific">Rhizobium johnstonii (strain DSM 114642 / LMG 32736 / 3841)</name>
    <name type="common">Rhizobium leguminosarum bv. viciae</name>
    <dbReference type="NCBI Taxonomy" id="216596"/>
    <lineage>
        <taxon>Bacteria</taxon>
        <taxon>Pseudomonadati</taxon>
        <taxon>Pseudomonadota</taxon>
        <taxon>Alphaproteobacteria</taxon>
        <taxon>Hyphomicrobiales</taxon>
        <taxon>Rhizobiaceae</taxon>
        <taxon>Rhizobium/Agrobacterium group</taxon>
        <taxon>Rhizobium</taxon>
        <taxon>Rhizobium johnstonii</taxon>
    </lineage>
</organism>
<protein>
    <recommendedName>
        <fullName evidence="1">ATP-dependent Clp protease proteolytic subunit 2</fullName>
        <ecNumber evidence="1">3.4.21.92</ecNumber>
    </recommendedName>
    <alternativeName>
        <fullName evidence="1">Endopeptidase Clp 2</fullName>
    </alternativeName>
</protein>
<feature type="chain" id="PRO_0000252836" description="ATP-dependent Clp protease proteolytic subunit 2">
    <location>
        <begin position="1"/>
        <end position="201"/>
    </location>
</feature>
<feature type="active site" description="Nucleophile" evidence="1">
    <location>
        <position position="98"/>
    </location>
</feature>
<feature type="active site" evidence="1">
    <location>
        <position position="123"/>
    </location>
</feature>
<evidence type="ECO:0000255" key="1">
    <source>
        <dbReference type="HAMAP-Rule" id="MF_00444"/>
    </source>
</evidence>